<sequence length="278" mass="29893">MANYTAADVKKLRELTGAGMMDCKKALDEAEGNVEKAVEALRIKGQKGVAKREGRSAENGAVVSIIADDNSSGVLVELKCETDFVAKGEKFQNVATAIAEHVAKAAPADLDALLASEIEAGKTVQAFVDEANANLGEKIVLDRFAQFADGYVLAYMHRTMPDLPPQIGVLVELDKPNAEVAKGVAQHIAAFAPKYLSKEDVRPDVVESERRIAEETTRAEGKPEAAIAKIVEGRVNGFFKDATLLGQPYALDNKKSVQKVLDEAGVTLKRFTRIKVGI</sequence>
<name>EFTS_STRRA</name>
<gene>
    <name type="primary">tsf</name>
</gene>
<feature type="chain" id="PRO_0000161214" description="Elongation factor Ts">
    <location>
        <begin position="1"/>
        <end position="278"/>
    </location>
</feature>
<feature type="region of interest" description="Involved in Mg(2+) ion dislocation from EF-Tu" evidence="1">
    <location>
        <begin position="82"/>
        <end position="85"/>
    </location>
</feature>
<organism>
    <name type="scientific">Streptomyces ramocissimus</name>
    <dbReference type="NCBI Taxonomy" id="1925"/>
    <lineage>
        <taxon>Bacteria</taxon>
        <taxon>Bacillati</taxon>
        <taxon>Actinomycetota</taxon>
        <taxon>Actinomycetes</taxon>
        <taxon>Kitasatosporales</taxon>
        <taxon>Streptomycetaceae</taxon>
        <taxon>Streptomyces</taxon>
    </lineage>
</organism>
<keyword id="KW-0963">Cytoplasm</keyword>
<keyword id="KW-0251">Elongation factor</keyword>
<keyword id="KW-0648">Protein biosynthesis</keyword>
<comment type="function">
    <text evidence="1">Associates with the EF-Tu.GDP complex and induces the exchange of GDP to GTP. It remains bound to the aminoacyl-tRNA.EF-Tu.GTP complex up to the GTP hydrolysis stage on the ribosome (By similarity).</text>
</comment>
<comment type="subcellular location">
    <subcellularLocation>
        <location evidence="1">Cytoplasm</location>
    </subcellularLocation>
</comment>
<comment type="similarity">
    <text evidence="2">Belongs to the EF-Ts family.</text>
</comment>
<reference key="1">
    <citation type="journal article" date="1999" name="Microbiology">
        <title>Evidence that a single EF-Ts suffices for the recycling of multiple and divergent EF-Tu species in Streptomyces coelicolor A3(2) and Streptomyces ramocissimus.</title>
        <authorList>
            <person name="Hoogvliet G."/>
            <person name="van Wezel G.P."/>
            <person name="Kraal B."/>
        </authorList>
    </citation>
    <scope>NUCLEOTIDE SEQUENCE [GENOMIC DNA]</scope>
    <source>
        <strain>ATCC 27529 / CBS 190.69</strain>
    </source>
</reference>
<protein>
    <recommendedName>
        <fullName>Elongation factor Ts</fullName>
        <shortName>EF-Ts</shortName>
    </recommendedName>
</protein>
<evidence type="ECO:0000250" key="1"/>
<evidence type="ECO:0000305" key="2"/>
<dbReference type="EMBL" id="AF130345">
    <property type="protein sequence ID" value="AAD34362.1"/>
    <property type="molecule type" value="Genomic_DNA"/>
</dbReference>
<dbReference type="SMR" id="Q9X5Z9"/>
<dbReference type="GO" id="GO:0005737">
    <property type="term" value="C:cytoplasm"/>
    <property type="evidence" value="ECO:0007669"/>
    <property type="project" value="UniProtKB-SubCell"/>
</dbReference>
<dbReference type="GO" id="GO:0003746">
    <property type="term" value="F:translation elongation factor activity"/>
    <property type="evidence" value="ECO:0007669"/>
    <property type="project" value="UniProtKB-UniRule"/>
</dbReference>
<dbReference type="CDD" id="cd14275">
    <property type="entry name" value="UBA_EF-Ts"/>
    <property type="match status" value="1"/>
</dbReference>
<dbReference type="FunFam" id="1.10.286.20:FF:000001">
    <property type="entry name" value="Elongation factor Ts"/>
    <property type="match status" value="1"/>
</dbReference>
<dbReference type="FunFam" id="1.10.8.10:FF:000001">
    <property type="entry name" value="Elongation factor Ts"/>
    <property type="match status" value="1"/>
</dbReference>
<dbReference type="FunFam" id="3.30.479.20:FF:000010">
    <property type="entry name" value="Elongation factor Ts"/>
    <property type="match status" value="1"/>
</dbReference>
<dbReference type="Gene3D" id="1.10.286.20">
    <property type="match status" value="1"/>
</dbReference>
<dbReference type="Gene3D" id="1.10.8.10">
    <property type="entry name" value="DNA helicase RuvA subunit, C-terminal domain"/>
    <property type="match status" value="1"/>
</dbReference>
<dbReference type="Gene3D" id="3.30.479.20">
    <property type="entry name" value="Elongation factor Ts, dimerisation domain"/>
    <property type="match status" value="2"/>
</dbReference>
<dbReference type="HAMAP" id="MF_00050">
    <property type="entry name" value="EF_Ts"/>
    <property type="match status" value="1"/>
</dbReference>
<dbReference type="InterPro" id="IPR036402">
    <property type="entry name" value="EF-Ts_dimer_sf"/>
</dbReference>
<dbReference type="InterPro" id="IPR001816">
    <property type="entry name" value="Transl_elong_EFTs/EF1B"/>
</dbReference>
<dbReference type="InterPro" id="IPR014039">
    <property type="entry name" value="Transl_elong_EFTs/EF1B_dimer"/>
</dbReference>
<dbReference type="InterPro" id="IPR018101">
    <property type="entry name" value="Transl_elong_Ts_CS"/>
</dbReference>
<dbReference type="InterPro" id="IPR009060">
    <property type="entry name" value="UBA-like_sf"/>
</dbReference>
<dbReference type="NCBIfam" id="TIGR00116">
    <property type="entry name" value="tsf"/>
    <property type="match status" value="1"/>
</dbReference>
<dbReference type="PANTHER" id="PTHR11741">
    <property type="entry name" value="ELONGATION FACTOR TS"/>
    <property type="match status" value="1"/>
</dbReference>
<dbReference type="PANTHER" id="PTHR11741:SF0">
    <property type="entry name" value="ELONGATION FACTOR TS, MITOCHONDRIAL"/>
    <property type="match status" value="1"/>
</dbReference>
<dbReference type="Pfam" id="PF00889">
    <property type="entry name" value="EF_TS"/>
    <property type="match status" value="1"/>
</dbReference>
<dbReference type="SUPFAM" id="SSF54713">
    <property type="entry name" value="Elongation factor Ts (EF-Ts), dimerisation domain"/>
    <property type="match status" value="2"/>
</dbReference>
<dbReference type="SUPFAM" id="SSF46934">
    <property type="entry name" value="UBA-like"/>
    <property type="match status" value="1"/>
</dbReference>
<dbReference type="PROSITE" id="PS01126">
    <property type="entry name" value="EF_TS_1"/>
    <property type="match status" value="1"/>
</dbReference>
<dbReference type="PROSITE" id="PS01127">
    <property type="entry name" value="EF_TS_2"/>
    <property type="match status" value="1"/>
</dbReference>
<proteinExistence type="inferred from homology"/>
<accession>Q9X5Z9</accession>